<proteinExistence type="evidence at protein level"/>
<keyword id="KW-0378">Hydrolase</keyword>
<sequence>MSEQAVEVSPKCLGPQHHINPLRFVMPPGSWDTHFHVFGPTTKYPYSETRKYTPPDSPFEEYVKLMLALGIERGVCVHPNIHGPDNSVTLDAVERSEGRFLAIVKIAPDVTLPQLKEMKKKGACGVRFAFNPEHGSGELDTALFDRVVQWCGELDWCVNLHFASNAIHSLAERLSQLTIPTLIDHFGRVHPTKGVDQPDFKTLVDLMRLPHMWVKLTGADRISRNSPSYQDVVPLARTLVDVAPDRVIWGTDWPHSGYFDVKRMPNDGDLTNLLLDFAPSEEQRRRILVDNPSRLFGQVAKGA</sequence>
<organism>
    <name type="scientific">Hydrogenophaga intermedia</name>
    <dbReference type="NCBI Taxonomy" id="65786"/>
    <lineage>
        <taxon>Bacteria</taxon>
        <taxon>Pseudomonadati</taxon>
        <taxon>Pseudomonadota</taxon>
        <taxon>Betaproteobacteria</taxon>
        <taxon>Burkholderiales</taxon>
        <taxon>Comamonadaceae</taxon>
        <taxon>Hydrogenophaga</taxon>
    </lineage>
</organism>
<dbReference type="EC" id="3.1.1.92"/>
<dbReference type="EMBL" id="DQ813261">
    <property type="protein sequence ID" value="ABH09754.1"/>
    <property type="molecule type" value="Genomic_DNA"/>
</dbReference>
<dbReference type="SMR" id="A6XIG6"/>
<dbReference type="KEGG" id="ag:ABH09754"/>
<dbReference type="BioCyc" id="MetaCyc:MONOMER-14206"/>
<dbReference type="BRENDA" id="3.1.1.92">
    <property type="organism ID" value="9756"/>
</dbReference>
<dbReference type="GO" id="GO:0102998">
    <property type="term" value="F:4-sulfomuconolactone hydrolase activity"/>
    <property type="evidence" value="ECO:0000314"/>
    <property type="project" value="UniProtKB"/>
</dbReference>
<dbReference type="Gene3D" id="3.20.20.140">
    <property type="entry name" value="Metal-dependent hydrolases"/>
    <property type="match status" value="1"/>
</dbReference>
<dbReference type="InterPro" id="IPR006680">
    <property type="entry name" value="Amidohydro-rel"/>
</dbReference>
<dbReference type="InterPro" id="IPR052358">
    <property type="entry name" value="Aro_Compnd_Degr_Hydrolases"/>
</dbReference>
<dbReference type="InterPro" id="IPR032466">
    <property type="entry name" value="Metal_Hydrolase"/>
</dbReference>
<dbReference type="InterPro" id="IPR053519">
    <property type="entry name" value="SML-Hydrolase"/>
</dbReference>
<dbReference type="NCBIfam" id="NF042924">
    <property type="entry name" value="SlmHylase"/>
    <property type="match status" value="1"/>
</dbReference>
<dbReference type="PANTHER" id="PTHR35563">
    <property type="entry name" value="BARREL METAL-DEPENDENT HYDROLASE, PUTATIVE (AFU_ORTHOLOGUE AFUA_1G16240)-RELATED"/>
    <property type="match status" value="1"/>
</dbReference>
<dbReference type="PANTHER" id="PTHR35563:SF2">
    <property type="entry name" value="BARREL METAL-DEPENDENT HYDROLASE, PUTATIVE (AFU_ORTHOLOGUE AFUA_1G16240)-RELATED"/>
    <property type="match status" value="1"/>
</dbReference>
<dbReference type="Pfam" id="PF04909">
    <property type="entry name" value="Amidohydro_2"/>
    <property type="match status" value="1"/>
</dbReference>
<dbReference type="SUPFAM" id="SSF51556">
    <property type="entry name" value="Metallo-dependent hydrolases"/>
    <property type="match status" value="1"/>
</dbReference>
<reference key="1">
    <citation type="journal article" date="2007" name="J. Bacteriol.">
        <title>4-sulfomuconolactone hydrolases from Hydrogenophaga intermedia S1 and Agrobacterium radiobacter S2.</title>
        <authorList>
            <person name="Halak S."/>
            <person name="Basta T."/>
            <person name="Burger S."/>
            <person name="Contzen M."/>
            <person name="Wray V."/>
            <person name="Pieper D.H."/>
            <person name="Stolz A."/>
        </authorList>
    </citation>
    <scope>NUCLEOTIDE SEQUENCE [GENOMIC DNA]</scope>
    <scope>FUNCTION</scope>
    <scope>CATALYTIC ACTIVITY</scope>
    <scope>BIOPHYSICOCHEMICAL PROPERTIES</scope>
    <scope>ACTIVITY REGULATION</scope>
    <scope>COFACTOR</scope>
    <scope>SUBUNIT</scope>
    <source>
        <strain>DSM 5680 / S1</strain>
    </source>
</reference>
<protein>
    <recommendedName>
        <fullName>4-sulfomuconolactone hydrolase</fullName>
        <ecNumber>3.1.1.92</ecNumber>
    </recommendedName>
    <alternativeName>
        <fullName>4-carboxymethylen-4-sulfo-but-2-en-olide hydrolases</fullName>
    </alternativeName>
</protein>
<comment type="function">
    <text evidence="1">Involved in the degradation of 4-sulfocatechol which is a central intermediate in the degradation of substituted sulfonated benzenes. Catalyzes the hydrolytical desulfonation of 4-sulfomuconolactone to yield maleylacetate.</text>
</comment>
<comment type="catalytic activity">
    <reaction evidence="1">
        <text>4-sulfomuconolactone + H2O = maleylacetate + sulfite + 2 H(+)</text>
        <dbReference type="Rhea" id="RHEA:33711"/>
        <dbReference type="ChEBI" id="CHEBI:15377"/>
        <dbReference type="ChEBI" id="CHEBI:15378"/>
        <dbReference type="ChEBI" id="CHEBI:16468"/>
        <dbReference type="ChEBI" id="CHEBI:17359"/>
        <dbReference type="ChEBI" id="CHEBI:20479"/>
        <dbReference type="EC" id="3.1.1.92"/>
    </reaction>
</comment>
<comment type="cofactor">
    <cofactor evidence="3">
        <name>Zn(2+)</name>
        <dbReference type="ChEBI" id="CHEBI:29105"/>
    </cofactor>
</comment>
<comment type="activity regulation">
    <text evidence="1">Completely inhibited by ZnCl(2) and CuCl(2).</text>
</comment>
<comment type="biophysicochemical properties">
    <kinetics>
        <KM evidence="1">1.9 mM for 4-sulfomuconolactone (at pH 8)</KM>
        <Vmax evidence="1">79.0 umol/min/mg enzyme (at pH 8)</Vmax>
        <text>kcat is 2700 min(-1) with 4-sulfomuconolactone (at pH 8).</text>
    </kinetics>
    <phDependence>
        <text evidence="1">Optimum pH is between 7 and 7.5. Approximately 30% of the maximal activities are still detected at pH 5 and pH 9.</text>
    </phDependence>
</comment>
<comment type="subunit">
    <text evidence="1">Monomer.</text>
</comment>
<comment type="similarity">
    <text evidence="2">Belongs to the metallo-dependent hydrolases superfamily. Sulfomuconolactone hydrolase family.</text>
</comment>
<name>SLMH_HYDIT</name>
<feature type="chain" id="PRO_0000422786" description="4-sulfomuconolactone hydrolase">
    <location>
        <begin position="1"/>
        <end position="303"/>
    </location>
</feature>
<evidence type="ECO:0000269" key="1">
    <source>
    </source>
</evidence>
<evidence type="ECO:0000305" key="2"/>
<evidence type="ECO:0000305" key="3">
    <source>
    </source>
</evidence>
<accession>A6XIG6</accession>